<reference key="1">
    <citation type="journal article" date="2010" name="Genome Biol. Evol.">
        <title>Continuing evolution of Burkholderia mallei through genome reduction and large-scale rearrangements.</title>
        <authorList>
            <person name="Losada L."/>
            <person name="Ronning C.M."/>
            <person name="DeShazer D."/>
            <person name="Woods D."/>
            <person name="Fedorova N."/>
            <person name="Kim H.S."/>
            <person name="Shabalina S.A."/>
            <person name="Pearson T.R."/>
            <person name="Brinkac L."/>
            <person name="Tan P."/>
            <person name="Nandi T."/>
            <person name="Crabtree J."/>
            <person name="Badger J."/>
            <person name="Beckstrom-Sternberg S."/>
            <person name="Saqib M."/>
            <person name="Schutzer S.E."/>
            <person name="Keim P."/>
            <person name="Nierman W.C."/>
        </authorList>
    </citation>
    <scope>NUCLEOTIDE SEQUENCE [LARGE SCALE GENOMIC DNA]</scope>
    <source>
        <strain>NCTC 10229</strain>
    </source>
</reference>
<organism>
    <name type="scientific">Burkholderia mallei (strain NCTC 10229)</name>
    <dbReference type="NCBI Taxonomy" id="412022"/>
    <lineage>
        <taxon>Bacteria</taxon>
        <taxon>Pseudomonadati</taxon>
        <taxon>Pseudomonadota</taxon>
        <taxon>Betaproteobacteria</taxon>
        <taxon>Burkholderiales</taxon>
        <taxon>Burkholderiaceae</taxon>
        <taxon>Burkholderia</taxon>
        <taxon>pseudomallei group</taxon>
    </lineage>
</organism>
<name>KYNB_BURM9</name>
<protein>
    <recommendedName>
        <fullName evidence="1">Kynurenine formamidase</fullName>
        <shortName evidence="1">KFA</shortName>
        <shortName evidence="1">KFase</shortName>
        <ecNumber evidence="1">3.5.1.9</ecNumber>
    </recommendedName>
    <alternativeName>
        <fullName evidence="1">Arylformamidase</fullName>
    </alternativeName>
    <alternativeName>
        <fullName evidence="1">N-formylkynurenine formamidase</fullName>
        <shortName evidence="1">FKF</shortName>
    </alternativeName>
</protein>
<evidence type="ECO:0000255" key="1">
    <source>
        <dbReference type="HAMAP-Rule" id="MF_01969"/>
    </source>
</evidence>
<keyword id="KW-0378">Hydrolase</keyword>
<keyword id="KW-0479">Metal-binding</keyword>
<keyword id="KW-0823">Tryptophan catabolism</keyword>
<keyword id="KW-0862">Zinc</keyword>
<dbReference type="EC" id="3.5.1.9" evidence="1"/>
<dbReference type="EMBL" id="CP000546">
    <property type="protein sequence ID" value="ABN00771.1"/>
    <property type="molecule type" value="Genomic_DNA"/>
</dbReference>
<dbReference type="RefSeq" id="WP_004198883.1">
    <property type="nucleotide sequence ID" value="NC_008836.1"/>
</dbReference>
<dbReference type="SMR" id="A2S926"/>
<dbReference type="GeneID" id="92978123"/>
<dbReference type="KEGG" id="bml:BMA10229_A2487"/>
<dbReference type="HOGENOM" id="CLU_030671_3_1_4"/>
<dbReference type="UniPathway" id="UPA00333">
    <property type="reaction ID" value="UER00454"/>
</dbReference>
<dbReference type="Proteomes" id="UP000002283">
    <property type="component" value="Chromosome I"/>
</dbReference>
<dbReference type="GO" id="GO:0004061">
    <property type="term" value="F:arylformamidase activity"/>
    <property type="evidence" value="ECO:0000250"/>
    <property type="project" value="UniProtKB"/>
</dbReference>
<dbReference type="GO" id="GO:0004328">
    <property type="term" value="F:formamidase activity"/>
    <property type="evidence" value="ECO:0007669"/>
    <property type="project" value="InterPro"/>
</dbReference>
<dbReference type="GO" id="GO:0008270">
    <property type="term" value="F:zinc ion binding"/>
    <property type="evidence" value="ECO:0007669"/>
    <property type="project" value="UniProtKB-UniRule"/>
</dbReference>
<dbReference type="GO" id="GO:0043420">
    <property type="term" value="P:anthranilate metabolic process"/>
    <property type="evidence" value="ECO:0000250"/>
    <property type="project" value="UniProtKB"/>
</dbReference>
<dbReference type="GO" id="GO:0019441">
    <property type="term" value="P:L-tryptophan catabolic process to kynurenine"/>
    <property type="evidence" value="ECO:0000250"/>
    <property type="project" value="UniProtKB"/>
</dbReference>
<dbReference type="FunFam" id="3.50.30.50:FF:000001">
    <property type="entry name" value="Kynurenine formamidase"/>
    <property type="match status" value="1"/>
</dbReference>
<dbReference type="Gene3D" id="3.50.30.50">
    <property type="entry name" value="Putative cyclase"/>
    <property type="match status" value="1"/>
</dbReference>
<dbReference type="HAMAP" id="MF_01969">
    <property type="entry name" value="KynB"/>
    <property type="match status" value="1"/>
</dbReference>
<dbReference type="InterPro" id="IPR007325">
    <property type="entry name" value="KFase/CYL"/>
</dbReference>
<dbReference type="InterPro" id="IPR037175">
    <property type="entry name" value="KFase_sf"/>
</dbReference>
<dbReference type="InterPro" id="IPR017484">
    <property type="entry name" value="Kynurenine_formamidase_bac"/>
</dbReference>
<dbReference type="NCBIfam" id="TIGR03035">
    <property type="entry name" value="trp_arylform"/>
    <property type="match status" value="1"/>
</dbReference>
<dbReference type="PANTHER" id="PTHR31118">
    <property type="entry name" value="CYCLASE-LIKE PROTEIN 2"/>
    <property type="match status" value="1"/>
</dbReference>
<dbReference type="PANTHER" id="PTHR31118:SF32">
    <property type="entry name" value="KYNURENINE FORMAMIDASE"/>
    <property type="match status" value="1"/>
</dbReference>
<dbReference type="Pfam" id="PF04199">
    <property type="entry name" value="Cyclase"/>
    <property type="match status" value="1"/>
</dbReference>
<dbReference type="SUPFAM" id="SSF102198">
    <property type="entry name" value="Putative cyclase"/>
    <property type="match status" value="1"/>
</dbReference>
<feature type="chain" id="PRO_0000362107" description="Kynurenine formamidase">
    <location>
        <begin position="1"/>
        <end position="213"/>
    </location>
</feature>
<feature type="active site" description="Proton donor/acceptor" evidence="1">
    <location>
        <position position="58"/>
    </location>
</feature>
<feature type="binding site" evidence="1">
    <location>
        <position position="18"/>
    </location>
    <ligand>
        <name>substrate</name>
    </ligand>
</feature>
<feature type="binding site" evidence="1">
    <location>
        <position position="48"/>
    </location>
    <ligand>
        <name>Zn(2+)</name>
        <dbReference type="ChEBI" id="CHEBI:29105"/>
        <label>1</label>
    </ligand>
</feature>
<feature type="binding site" evidence="1">
    <location>
        <position position="52"/>
    </location>
    <ligand>
        <name>Zn(2+)</name>
        <dbReference type="ChEBI" id="CHEBI:29105"/>
        <label>1</label>
    </ligand>
</feature>
<feature type="binding site" evidence="1">
    <location>
        <position position="54"/>
    </location>
    <ligand>
        <name>Zn(2+)</name>
        <dbReference type="ChEBI" id="CHEBI:29105"/>
        <label>1</label>
    </ligand>
</feature>
<feature type="binding site" evidence="1">
    <location>
        <position position="54"/>
    </location>
    <ligand>
        <name>Zn(2+)</name>
        <dbReference type="ChEBI" id="CHEBI:29105"/>
        <label>2</label>
    </ligand>
</feature>
<feature type="binding site" evidence="1">
    <location>
        <position position="160"/>
    </location>
    <ligand>
        <name>Zn(2+)</name>
        <dbReference type="ChEBI" id="CHEBI:29105"/>
        <label>2</label>
    </ligand>
</feature>
<feature type="binding site" evidence="1">
    <location>
        <position position="172"/>
    </location>
    <ligand>
        <name>Zn(2+)</name>
        <dbReference type="ChEBI" id="CHEBI:29105"/>
        <label>1</label>
    </ligand>
</feature>
<feature type="binding site" evidence="1">
    <location>
        <position position="172"/>
    </location>
    <ligand>
        <name>Zn(2+)</name>
        <dbReference type="ChEBI" id="CHEBI:29105"/>
        <label>2</label>
    </ligand>
</feature>
<comment type="function">
    <text evidence="1">Catalyzes the hydrolysis of N-formyl-L-kynurenine to L-kynurenine, the second step in the kynurenine pathway of tryptophan degradation.</text>
</comment>
<comment type="catalytic activity">
    <reaction evidence="1">
        <text>N-formyl-L-kynurenine + H2O = L-kynurenine + formate + H(+)</text>
        <dbReference type="Rhea" id="RHEA:13009"/>
        <dbReference type="ChEBI" id="CHEBI:15377"/>
        <dbReference type="ChEBI" id="CHEBI:15378"/>
        <dbReference type="ChEBI" id="CHEBI:15740"/>
        <dbReference type="ChEBI" id="CHEBI:57959"/>
        <dbReference type="ChEBI" id="CHEBI:58629"/>
        <dbReference type="EC" id="3.5.1.9"/>
    </reaction>
</comment>
<comment type="cofactor">
    <cofactor evidence="1">
        <name>Zn(2+)</name>
        <dbReference type="ChEBI" id="CHEBI:29105"/>
    </cofactor>
    <text evidence="1">Binds 2 zinc ions per subunit.</text>
</comment>
<comment type="pathway">
    <text evidence="1">Amino-acid degradation; L-tryptophan degradation via kynurenine pathway; L-kynurenine from L-tryptophan: step 2/2.</text>
</comment>
<comment type="subunit">
    <text evidence="1">Homodimer.</text>
</comment>
<comment type="similarity">
    <text evidence="1">Belongs to the Cyclase 1 superfamily. KynB family.</text>
</comment>
<proteinExistence type="inferred from homology"/>
<gene>
    <name evidence="1" type="primary">kynB</name>
    <name type="ordered locus">BMA10229_A2487</name>
</gene>
<sequence>MDTIWDISPPIAPATPVWPGDTPVGIERVWRIEAGSPVNVARVTLSPHTGAHADAPLHYDADGTPIGAVPLDAYLGRCRVIHCIGARSAVTPEHVRAALAGAPPRVLLRTYGQAPQHAWDSAFCAVAPETIDLLAAHGVRLVGIDTPSLDPQESKTMDAHRRIRAHRMAILEGLVLDEIAAGDYELIALPLKFATLDASPVRAVLRALPAAPR</sequence>
<accession>A2S926</accession>